<accession>Q9PC24</accession>
<comment type="function">
    <text evidence="1">Catalyzes the ATP-dependent amidation of deamido-NAD to form NAD. Uses L-glutamine as a nitrogen source.</text>
</comment>
<comment type="catalytic activity">
    <reaction evidence="1">
        <text>deamido-NAD(+) + L-glutamine + ATP + H2O = L-glutamate + AMP + diphosphate + NAD(+) + H(+)</text>
        <dbReference type="Rhea" id="RHEA:24384"/>
        <dbReference type="ChEBI" id="CHEBI:15377"/>
        <dbReference type="ChEBI" id="CHEBI:15378"/>
        <dbReference type="ChEBI" id="CHEBI:29985"/>
        <dbReference type="ChEBI" id="CHEBI:30616"/>
        <dbReference type="ChEBI" id="CHEBI:33019"/>
        <dbReference type="ChEBI" id="CHEBI:57540"/>
        <dbReference type="ChEBI" id="CHEBI:58359"/>
        <dbReference type="ChEBI" id="CHEBI:58437"/>
        <dbReference type="ChEBI" id="CHEBI:456215"/>
        <dbReference type="EC" id="6.3.5.1"/>
    </reaction>
</comment>
<comment type="pathway">
    <text evidence="1">Cofactor biosynthesis; NAD(+) biosynthesis; NAD(+) from deamido-NAD(+) (L-Gln route): step 1/1.</text>
</comment>
<comment type="similarity">
    <text evidence="1 3">In the C-terminal section; belongs to the NAD synthetase family.</text>
</comment>
<evidence type="ECO:0000255" key="1">
    <source>
        <dbReference type="HAMAP-Rule" id="MF_02090"/>
    </source>
</evidence>
<evidence type="ECO:0000255" key="2">
    <source>
        <dbReference type="PROSITE-ProRule" id="PRU00054"/>
    </source>
</evidence>
<evidence type="ECO:0000305" key="3"/>
<proteinExistence type="inferred from homology"/>
<protein>
    <recommendedName>
        <fullName evidence="1">Glutamine-dependent NAD(+) synthetase</fullName>
        <ecNumber evidence="1">6.3.5.1</ecNumber>
    </recommendedName>
    <alternativeName>
        <fullName evidence="1">NAD(+) synthase [glutamine-hydrolyzing]</fullName>
    </alternativeName>
</protein>
<sequence length="545" mass="59261">MSEFLRIAMAQFDFPVGAVAQNAERIIALIEQARDEHGADVVMFPELALSGYPPEDLLLRPGFLAHCQVAIERIAAATHGIVAVVGWPQSAGSVVYNVASVLCDGQVEQTYRKRELPNYAVFDERRYFEVDPNGSRCVFKVKGVPVGVLICEDLWFSEPLADTVCGGAELVLVPNASPYERGKHAQRDALLAERARETGAAIAYLNVVGGQDALVFDGASVVVDGHGRVHPAAAAFSDQWLVVDYMRSERRFVPLQWVAESEVSINALVWRAVVRGVQDYCRKNGFSKVWVGLSGGIDSALVLAIAVDALGADQVTAVRLPSRYTAELSNDLAAEQCHSLGVRLETVAIEPVFEGLLAALGPLFAGMAPDATEENLQSRSRGVILMALANKFGGLLLTTGNKSEYAVGYATIYGDMCGGYAPLKDIYKSQVFELAQWRNTVSDVLAIPPGVIHRPPSAELRAQQTDQDSLPPYEVLDGILSLYVDQEQSREDIIAAGYAAGVVDYVLNLVKINEWKRHQAAPGPKVSQRAFGRERRYPISNAYRG</sequence>
<name>NADE_XYLFA</name>
<organism>
    <name type="scientific">Xylella fastidiosa (strain 9a5c)</name>
    <dbReference type="NCBI Taxonomy" id="160492"/>
    <lineage>
        <taxon>Bacteria</taxon>
        <taxon>Pseudomonadati</taxon>
        <taxon>Pseudomonadota</taxon>
        <taxon>Gammaproteobacteria</taxon>
        <taxon>Lysobacterales</taxon>
        <taxon>Lysobacteraceae</taxon>
        <taxon>Xylella</taxon>
    </lineage>
</organism>
<gene>
    <name evidence="1" type="primary">nadE</name>
    <name type="ordered locus">XF_1961</name>
</gene>
<reference key="1">
    <citation type="journal article" date="2000" name="Nature">
        <title>The genome sequence of the plant pathogen Xylella fastidiosa.</title>
        <authorList>
            <person name="Simpson A.J.G."/>
            <person name="Reinach F.C."/>
            <person name="Arruda P."/>
            <person name="Abreu F.A."/>
            <person name="Acencio M."/>
            <person name="Alvarenga R."/>
            <person name="Alves L.M.C."/>
            <person name="Araya J.E."/>
            <person name="Baia G.S."/>
            <person name="Baptista C.S."/>
            <person name="Barros M.H."/>
            <person name="Bonaccorsi E.D."/>
            <person name="Bordin S."/>
            <person name="Bove J.M."/>
            <person name="Briones M.R.S."/>
            <person name="Bueno M.R.P."/>
            <person name="Camargo A.A."/>
            <person name="Camargo L.E.A."/>
            <person name="Carraro D.M."/>
            <person name="Carrer H."/>
            <person name="Colauto N.B."/>
            <person name="Colombo C."/>
            <person name="Costa F.F."/>
            <person name="Costa M.C.R."/>
            <person name="Costa-Neto C.M."/>
            <person name="Coutinho L.L."/>
            <person name="Cristofani M."/>
            <person name="Dias-Neto E."/>
            <person name="Docena C."/>
            <person name="El-Dorry H."/>
            <person name="Facincani A.P."/>
            <person name="Ferreira A.J.S."/>
            <person name="Ferreira V.C.A."/>
            <person name="Ferro J.A."/>
            <person name="Fraga J.S."/>
            <person name="Franca S.C."/>
            <person name="Franco M.C."/>
            <person name="Frohme M."/>
            <person name="Furlan L.R."/>
            <person name="Garnier M."/>
            <person name="Goldman G.H."/>
            <person name="Goldman M.H.S."/>
            <person name="Gomes S.L."/>
            <person name="Gruber A."/>
            <person name="Ho P.L."/>
            <person name="Hoheisel J.D."/>
            <person name="Junqueira M.L."/>
            <person name="Kemper E.L."/>
            <person name="Kitajima J.P."/>
            <person name="Krieger J.E."/>
            <person name="Kuramae E.E."/>
            <person name="Laigret F."/>
            <person name="Lambais M.R."/>
            <person name="Leite L.C.C."/>
            <person name="Lemos E.G.M."/>
            <person name="Lemos M.V.F."/>
            <person name="Lopes S.A."/>
            <person name="Lopes C.R."/>
            <person name="Machado J.A."/>
            <person name="Machado M.A."/>
            <person name="Madeira A.M.B.N."/>
            <person name="Madeira H.M.F."/>
            <person name="Marino C.L."/>
            <person name="Marques M.V."/>
            <person name="Martins E.A.L."/>
            <person name="Martins E.M.F."/>
            <person name="Matsukuma A.Y."/>
            <person name="Menck C.F.M."/>
            <person name="Miracca E.C."/>
            <person name="Miyaki C.Y."/>
            <person name="Monteiro-Vitorello C.B."/>
            <person name="Moon D.H."/>
            <person name="Nagai M.A."/>
            <person name="Nascimento A.L.T.O."/>
            <person name="Netto L.E.S."/>
            <person name="Nhani A. Jr."/>
            <person name="Nobrega F.G."/>
            <person name="Nunes L.R."/>
            <person name="Oliveira M.A."/>
            <person name="de Oliveira M.C."/>
            <person name="de Oliveira R.C."/>
            <person name="Palmieri D.A."/>
            <person name="Paris A."/>
            <person name="Peixoto B.R."/>
            <person name="Pereira G.A.G."/>
            <person name="Pereira H.A. Jr."/>
            <person name="Pesquero J.B."/>
            <person name="Quaggio R.B."/>
            <person name="Roberto P.G."/>
            <person name="Rodrigues V."/>
            <person name="de Rosa A.J.M."/>
            <person name="de Rosa V.E. Jr."/>
            <person name="de Sa R.G."/>
            <person name="Santelli R.V."/>
            <person name="Sawasaki H.E."/>
            <person name="da Silva A.C.R."/>
            <person name="da Silva A.M."/>
            <person name="da Silva F.R."/>
            <person name="Silva W.A. Jr."/>
            <person name="da Silveira J.F."/>
            <person name="Silvestri M.L.Z."/>
            <person name="Siqueira W.J."/>
            <person name="de Souza A.A."/>
            <person name="de Souza A.P."/>
            <person name="Terenzi M.F."/>
            <person name="Truffi D."/>
            <person name="Tsai S.M."/>
            <person name="Tsuhako M.H."/>
            <person name="Vallada H."/>
            <person name="Van Sluys M.A."/>
            <person name="Verjovski-Almeida S."/>
            <person name="Vettore A.L."/>
            <person name="Zago M.A."/>
            <person name="Zatz M."/>
            <person name="Meidanis J."/>
            <person name="Setubal J.C."/>
        </authorList>
    </citation>
    <scope>NUCLEOTIDE SEQUENCE [LARGE SCALE GENOMIC DNA]</scope>
    <source>
        <strain>9a5c</strain>
    </source>
</reference>
<feature type="chain" id="PRO_0000306413" description="Glutamine-dependent NAD(+) synthetase">
    <location>
        <begin position="1"/>
        <end position="545"/>
    </location>
</feature>
<feature type="domain" description="CN hydrolase" evidence="2">
    <location>
        <begin position="5"/>
        <end position="247"/>
    </location>
</feature>
<feature type="region of interest" description="Ligase">
    <location>
        <begin position="269"/>
        <end position="545"/>
    </location>
</feature>
<feature type="active site" description="Proton acceptor; for glutaminase activity" evidence="1">
    <location>
        <position position="46"/>
    </location>
</feature>
<feature type="active site" description="For glutaminase activity" evidence="1">
    <location>
        <position position="113"/>
    </location>
</feature>
<feature type="active site" description="Nucleophile; for glutaminase activity" evidence="1">
    <location>
        <position position="151"/>
    </location>
</feature>
<feature type="binding site" evidence="1">
    <location>
        <position position="119"/>
    </location>
    <ligand>
        <name>L-glutamine</name>
        <dbReference type="ChEBI" id="CHEBI:58359"/>
    </ligand>
</feature>
<feature type="binding site" evidence="1">
    <location>
        <position position="177"/>
    </location>
    <ligand>
        <name>L-glutamine</name>
        <dbReference type="ChEBI" id="CHEBI:58359"/>
    </ligand>
</feature>
<feature type="binding site" evidence="1">
    <location>
        <position position="183"/>
    </location>
    <ligand>
        <name>L-glutamine</name>
        <dbReference type="ChEBI" id="CHEBI:58359"/>
    </ligand>
</feature>
<feature type="binding site" evidence="1">
    <location>
        <begin position="292"/>
        <end position="299"/>
    </location>
    <ligand>
        <name>ATP</name>
        <dbReference type="ChEBI" id="CHEBI:30616"/>
    </ligand>
</feature>
<feature type="binding site" evidence="1">
    <location>
        <position position="375"/>
    </location>
    <ligand>
        <name>deamido-NAD(+)</name>
        <dbReference type="ChEBI" id="CHEBI:58437"/>
    </ligand>
</feature>
<feature type="binding site" evidence="1">
    <location>
        <position position="399"/>
    </location>
    <ligand>
        <name>ATP</name>
        <dbReference type="ChEBI" id="CHEBI:30616"/>
    </ligand>
</feature>
<feature type="binding site" evidence="1">
    <location>
        <position position="404"/>
    </location>
    <ligand>
        <name>deamido-NAD(+)</name>
        <dbReference type="ChEBI" id="CHEBI:58437"/>
    </ligand>
</feature>
<feature type="binding site" evidence="1">
    <location>
        <position position="516"/>
    </location>
    <ligand>
        <name>deamido-NAD(+)</name>
        <dbReference type="ChEBI" id="CHEBI:58437"/>
    </ligand>
</feature>
<keyword id="KW-0067">ATP-binding</keyword>
<keyword id="KW-0436">Ligase</keyword>
<keyword id="KW-0520">NAD</keyword>
<keyword id="KW-0547">Nucleotide-binding</keyword>
<dbReference type="EC" id="6.3.5.1" evidence="1"/>
<dbReference type="EMBL" id="AE003849">
    <property type="protein sequence ID" value="AAF84763.1"/>
    <property type="molecule type" value="Genomic_DNA"/>
</dbReference>
<dbReference type="PIR" id="C82617">
    <property type="entry name" value="C82617"/>
</dbReference>
<dbReference type="RefSeq" id="WP_010894420.1">
    <property type="nucleotide sequence ID" value="NC_002488.3"/>
</dbReference>
<dbReference type="SMR" id="Q9PC24"/>
<dbReference type="STRING" id="160492.XF_1961"/>
<dbReference type="KEGG" id="xfa:XF_1961"/>
<dbReference type="PATRIC" id="fig|160492.11.peg.2090"/>
<dbReference type="eggNOG" id="COG0171">
    <property type="taxonomic scope" value="Bacteria"/>
</dbReference>
<dbReference type="eggNOG" id="COG0388">
    <property type="taxonomic scope" value="Bacteria"/>
</dbReference>
<dbReference type="HOGENOM" id="CLU_022313_2_0_6"/>
<dbReference type="UniPathway" id="UPA00253">
    <property type="reaction ID" value="UER00334"/>
</dbReference>
<dbReference type="Proteomes" id="UP000000812">
    <property type="component" value="Chromosome"/>
</dbReference>
<dbReference type="GO" id="GO:0005737">
    <property type="term" value="C:cytoplasm"/>
    <property type="evidence" value="ECO:0007669"/>
    <property type="project" value="InterPro"/>
</dbReference>
<dbReference type="GO" id="GO:0005524">
    <property type="term" value="F:ATP binding"/>
    <property type="evidence" value="ECO:0007669"/>
    <property type="project" value="UniProtKB-UniRule"/>
</dbReference>
<dbReference type="GO" id="GO:0004359">
    <property type="term" value="F:glutaminase activity"/>
    <property type="evidence" value="ECO:0007669"/>
    <property type="project" value="InterPro"/>
</dbReference>
<dbReference type="GO" id="GO:0003952">
    <property type="term" value="F:NAD+ synthase (glutamine-hydrolyzing) activity"/>
    <property type="evidence" value="ECO:0007669"/>
    <property type="project" value="UniProtKB-EC"/>
</dbReference>
<dbReference type="GO" id="GO:0008795">
    <property type="term" value="F:NAD+ synthase activity"/>
    <property type="evidence" value="ECO:0007669"/>
    <property type="project" value="UniProtKB-UniRule"/>
</dbReference>
<dbReference type="GO" id="GO:0000257">
    <property type="term" value="F:nitrilase activity"/>
    <property type="evidence" value="ECO:0007669"/>
    <property type="project" value="UniProtKB-ARBA"/>
</dbReference>
<dbReference type="GO" id="GO:0009435">
    <property type="term" value="P:NAD biosynthetic process"/>
    <property type="evidence" value="ECO:0007669"/>
    <property type="project" value="UniProtKB-UniRule"/>
</dbReference>
<dbReference type="CDD" id="cd07570">
    <property type="entry name" value="GAT_Gln-NAD-synth"/>
    <property type="match status" value="1"/>
</dbReference>
<dbReference type="CDD" id="cd00553">
    <property type="entry name" value="NAD_synthase"/>
    <property type="match status" value="1"/>
</dbReference>
<dbReference type="FunFam" id="3.40.50.620:FF:000106">
    <property type="entry name" value="Glutamine-dependent NAD(+) synthetase"/>
    <property type="match status" value="1"/>
</dbReference>
<dbReference type="Gene3D" id="3.60.110.10">
    <property type="entry name" value="Carbon-nitrogen hydrolase"/>
    <property type="match status" value="1"/>
</dbReference>
<dbReference type="Gene3D" id="3.40.50.620">
    <property type="entry name" value="HUPs"/>
    <property type="match status" value="1"/>
</dbReference>
<dbReference type="HAMAP" id="MF_02090">
    <property type="entry name" value="NadE_glutamine_dep"/>
    <property type="match status" value="1"/>
</dbReference>
<dbReference type="InterPro" id="IPR003010">
    <property type="entry name" value="C-N_Hydrolase"/>
</dbReference>
<dbReference type="InterPro" id="IPR036526">
    <property type="entry name" value="C-N_Hydrolase_sf"/>
</dbReference>
<dbReference type="InterPro" id="IPR014445">
    <property type="entry name" value="Gln-dep_NAD_synthase"/>
</dbReference>
<dbReference type="InterPro" id="IPR022310">
    <property type="entry name" value="NAD/GMP_synthase"/>
</dbReference>
<dbReference type="InterPro" id="IPR003694">
    <property type="entry name" value="NAD_synthase"/>
</dbReference>
<dbReference type="InterPro" id="IPR000132">
    <property type="entry name" value="Nitrilase/CN_hydratase_CS"/>
</dbReference>
<dbReference type="InterPro" id="IPR014729">
    <property type="entry name" value="Rossmann-like_a/b/a_fold"/>
</dbReference>
<dbReference type="NCBIfam" id="TIGR00552">
    <property type="entry name" value="nadE"/>
    <property type="match status" value="1"/>
</dbReference>
<dbReference type="NCBIfam" id="NF010588">
    <property type="entry name" value="PRK13981.1"/>
    <property type="match status" value="1"/>
</dbReference>
<dbReference type="PANTHER" id="PTHR23090:SF9">
    <property type="entry name" value="GLUTAMINE-DEPENDENT NAD(+) SYNTHETASE"/>
    <property type="match status" value="1"/>
</dbReference>
<dbReference type="PANTHER" id="PTHR23090">
    <property type="entry name" value="NH 3 /GLUTAMINE-DEPENDENT NAD + SYNTHETASE"/>
    <property type="match status" value="1"/>
</dbReference>
<dbReference type="Pfam" id="PF00795">
    <property type="entry name" value="CN_hydrolase"/>
    <property type="match status" value="1"/>
</dbReference>
<dbReference type="Pfam" id="PF02540">
    <property type="entry name" value="NAD_synthase"/>
    <property type="match status" value="1"/>
</dbReference>
<dbReference type="PIRSF" id="PIRSF006630">
    <property type="entry name" value="NADS_GAT"/>
    <property type="match status" value="1"/>
</dbReference>
<dbReference type="SUPFAM" id="SSF52402">
    <property type="entry name" value="Adenine nucleotide alpha hydrolases-like"/>
    <property type="match status" value="1"/>
</dbReference>
<dbReference type="SUPFAM" id="SSF56317">
    <property type="entry name" value="Carbon-nitrogen hydrolase"/>
    <property type="match status" value="1"/>
</dbReference>
<dbReference type="PROSITE" id="PS50263">
    <property type="entry name" value="CN_HYDROLASE"/>
    <property type="match status" value="1"/>
</dbReference>
<dbReference type="PROSITE" id="PS00920">
    <property type="entry name" value="NITRIL_CHT_1"/>
    <property type="match status" value="1"/>
</dbReference>